<comment type="subcellular location">
    <subcellularLocation>
        <location evidence="1">Nucleus</location>
    </subcellularLocation>
</comment>
<comment type="similarity">
    <text evidence="3">Belongs to the SH3BGR family.</text>
</comment>
<keyword id="KW-0539">Nucleus</keyword>
<keyword id="KW-1185">Reference proteome</keyword>
<keyword id="KW-0729">SH3-binding</keyword>
<reference key="1">
    <citation type="submission" date="2004-06" db="EMBL/GenBank/DDBJ databases">
        <authorList>
            <consortium name="NIH - Zebrafish Gene Collection (ZGC) project"/>
        </authorList>
    </citation>
    <scope>NUCLEOTIDE SEQUENCE [LARGE SCALE MRNA]</scope>
</reference>
<accession>Q6GMK7</accession>
<evidence type="ECO:0000250" key="1"/>
<evidence type="ECO:0000255" key="2"/>
<evidence type="ECO:0000305" key="3"/>
<feature type="chain" id="PRO_0000383688" description="SH3 domain-binding glutamic acid-rich-like protein 2">
    <location>
        <begin position="1"/>
        <end position="105"/>
    </location>
</feature>
<feature type="short sequence motif" description="SH3-binding" evidence="2">
    <location>
        <begin position="61"/>
        <end position="67"/>
    </location>
</feature>
<sequence>MVIRVYIASSSGSVAVKKRQQAIVGFLEANRISFEEVDITMLEDQRLWMYQKIPDEKRPEKGNPLPPQIFNGEDYCGDYEDFFQSKETNTVFSFLRLPSVKDSES</sequence>
<name>SH3L2_DANRE</name>
<gene>
    <name type="primary">sh3bgrl2</name>
    <name type="ORF">zgc:91852</name>
</gene>
<proteinExistence type="inferred from homology"/>
<dbReference type="EMBL" id="BC074037">
    <property type="protein sequence ID" value="AAH74037.1"/>
    <property type="molecule type" value="mRNA"/>
</dbReference>
<dbReference type="RefSeq" id="NP_001002197.1">
    <property type="nucleotide sequence ID" value="NM_001002197.1"/>
</dbReference>
<dbReference type="SMR" id="Q6GMK7"/>
<dbReference type="FunCoup" id="Q6GMK7">
    <property type="interactions" value="528"/>
</dbReference>
<dbReference type="STRING" id="7955.ENSDARP00000053545"/>
<dbReference type="PaxDb" id="7955-ENSDARP00000053545"/>
<dbReference type="Ensembl" id="ENSDART00000053546">
    <property type="protein sequence ID" value="ENSDARP00000053545"/>
    <property type="gene ID" value="ENSDARG00000036878"/>
</dbReference>
<dbReference type="GeneID" id="431744"/>
<dbReference type="KEGG" id="dre:431744"/>
<dbReference type="AGR" id="ZFIN:ZDB-GENE-040704-38"/>
<dbReference type="CTD" id="83699"/>
<dbReference type="ZFIN" id="ZDB-GENE-040704-38">
    <property type="gene designation" value="sh3bgrl2"/>
</dbReference>
<dbReference type="eggNOG" id="KOG4023">
    <property type="taxonomic scope" value="Eukaryota"/>
</dbReference>
<dbReference type="HOGENOM" id="CLU_084862_3_0_1"/>
<dbReference type="InParanoid" id="Q6GMK7"/>
<dbReference type="OMA" id="MYKNIPK"/>
<dbReference type="OrthoDB" id="9932926at2759"/>
<dbReference type="PhylomeDB" id="Q6GMK7"/>
<dbReference type="TreeFam" id="TF105574"/>
<dbReference type="PRO" id="PR:Q6GMK7"/>
<dbReference type="Proteomes" id="UP000000437">
    <property type="component" value="Alternate scaffold 23"/>
</dbReference>
<dbReference type="Proteomes" id="UP000000437">
    <property type="component" value="Chromosome 23"/>
</dbReference>
<dbReference type="Bgee" id="ENSDARG00000036878">
    <property type="expression patterns" value="Expressed in eyeball of camera-type eye and 31 other cell types or tissues"/>
</dbReference>
<dbReference type="GO" id="GO:0005737">
    <property type="term" value="C:cytoplasm"/>
    <property type="evidence" value="ECO:0000318"/>
    <property type="project" value="GO_Central"/>
</dbReference>
<dbReference type="GO" id="GO:0005634">
    <property type="term" value="C:nucleus"/>
    <property type="evidence" value="ECO:0007669"/>
    <property type="project" value="UniProtKB-SubCell"/>
</dbReference>
<dbReference type="GO" id="GO:0017124">
    <property type="term" value="F:SH3 domain binding"/>
    <property type="evidence" value="ECO:0007669"/>
    <property type="project" value="UniProtKB-KW"/>
</dbReference>
<dbReference type="CDD" id="cd03030">
    <property type="entry name" value="GRX_SH3BGR"/>
    <property type="match status" value="1"/>
</dbReference>
<dbReference type="Gene3D" id="3.40.30.10">
    <property type="entry name" value="Glutaredoxin"/>
    <property type="match status" value="1"/>
</dbReference>
<dbReference type="InterPro" id="IPR006993">
    <property type="entry name" value="Glut_rich_SH3-bd"/>
</dbReference>
<dbReference type="InterPro" id="IPR051033">
    <property type="entry name" value="SH3BGR"/>
</dbReference>
<dbReference type="InterPro" id="IPR036249">
    <property type="entry name" value="Thioredoxin-like_sf"/>
</dbReference>
<dbReference type="PANTHER" id="PTHR12232">
    <property type="entry name" value="SH3 DOMAIN-BINDING GLUTAMIC ACID-RICH-LIKE PROTEIN"/>
    <property type="match status" value="1"/>
</dbReference>
<dbReference type="PANTHER" id="PTHR12232:SF4">
    <property type="entry name" value="SH3 DOMAIN-BINDING GLUTAMIC ACID-RICH-LIKE PROTEIN 2"/>
    <property type="match status" value="1"/>
</dbReference>
<dbReference type="Pfam" id="PF04908">
    <property type="entry name" value="SH3BGR"/>
    <property type="match status" value="1"/>
</dbReference>
<dbReference type="PIRSF" id="PIRSF008142">
    <property type="entry name" value="SH3-bind_E-rich_L"/>
    <property type="match status" value="1"/>
</dbReference>
<dbReference type="SUPFAM" id="SSF52833">
    <property type="entry name" value="Thioredoxin-like"/>
    <property type="match status" value="1"/>
</dbReference>
<organism>
    <name type="scientific">Danio rerio</name>
    <name type="common">Zebrafish</name>
    <name type="synonym">Brachydanio rerio</name>
    <dbReference type="NCBI Taxonomy" id="7955"/>
    <lineage>
        <taxon>Eukaryota</taxon>
        <taxon>Metazoa</taxon>
        <taxon>Chordata</taxon>
        <taxon>Craniata</taxon>
        <taxon>Vertebrata</taxon>
        <taxon>Euteleostomi</taxon>
        <taxon>Actinopterygii</taxon>
        <taxon>Neopterygii</taxon>
        <taxon>Teleostei</taxon>
        <taxon>Ostariophysi</taxon>
        <taxon>Cypriniformes</taxon>
        <taxon>Danionidae</taxon>
        <taxon>Danioninae</taxon>
        <taxon>Danio</taxon>
    </lineage>
</organism>
<protein>
    <recommendedName>
        <fullName>SH3 domain-binding glutamic acid-rich-like protein 2</fullName>
    </recommendedName>
</protein>